<keyword id="KW-0002">3D-structure</keyword>
<keyword id="KW-0066">ATP synthesis</keyword>
<keyword id="KW-0139">CF(1)</keyword>
<keyword id="KW-0375">Hydrogen ion transport</keyword>
<keyword id="KW-0406">Ion transport</keyword>
<keyword id="KW-0472">Membrane</keyword>
<keyword id="KW-1185">Reference proteome</keyword>
<keyword id="KW-0793">Thylakoid</keyword>
<keyword id="KW-0813">Transport</keyword>
<comment type="function">
    <text>Produces ATP from ADP in the presence of a proton gradient across the membrane. The gamma chain is believed to be important in regulating ATPase activity and the flow of protons through the CF(0) complex.</text>
</comment>
<comment type="function">
    <text evidence="2">The complex from the organism is particularly stable to disruption and remains functional after 6 hrs at 55 degrees Celsius.</text>
</comment>
<comment type="subunit">
    <text evidence="2">F-type ATPases have 2 components, CF(1) - the catalytic core - and CF(0) - the membrane proton channel. CF(1) has five subunits: alpha(3), beta(3), gamma(1), delta(1), epsilon(1). CF(0) has four main subunits: a(1), b(1), b'(1) and c(9-12).</text>
</comment>
<comment type="subcellular location">
    <subcellularLocation>
        <location evidence="1 2">Cellular thylakoid membrane</location>
        <topology evidence="1 2">Peripheral membrane protein</topology>
    </subcellularLocation>
</comment>
<comment type="mass spectrometry" mass="35013.0" method="MALDI" evidence="2"/>
<comment type="similarity">
    <text evidence="1">Belongs to the ATPase gamma chain family.</text>
</comment>
<proteinExistence type="evidence at protein level"/>
<reference key="1">
    <citation type="journal article" date="2002" name="DNA Res.">
        <title>Complete genome structure of the thermophilic cyanobacterium Thermosynechococcus elongatus BP-1.</title>
        <authorList>
            <person name="Nakamura Y."/>
            <person name="Kaneko T."/>
            <person name="Sato S."/>
            <person name="Ikeuchi M."/>
            <person name="Katoh H."/>
            <person name="Sasamoto S."/>
            <person name="Watanabe A."/>
            <person name="Iriguchi M."/>
            <person name="Kawashima K."/>
            <person name="Kimura T."/>
            <person name="Kishida Y."/>
            <person name="Kiyokawa C."/>
            <person name="Kohara M."/>
            <person name="Matsumoto M."/>
            <person name="Matsuno A."/>
            <person name="Nakazaki N."/>
            <person name="Shimpo S."/>
            <person name="Sugimoto M."/>
            <person name="Takeuchi C."/>
            <person name="Yamada M."/>
            <person name="Tabata S."/>
        </authorList>
    </citation>
    <scope>NUCLEOTIDE SEQUENCE [LARGE SCALE GENOMIC DNA]</scope>
    <source>
        <strain>NIES-2133 / IAM M-273 / BP-1</strain>
    </source>
</reference>
<reference key="2">
    <citation type="journal article" date="2008" name="Biochim. Biophys. Acta">
        <title>Remarkable stability of the proton translocating F1FO-ATP synthase from the thermophilic cyanobacterium Thermosynechococcus elongatus BP-1.</title>
        <authorList>
            <person name="Suhai T."/>
            <person name="Dencher N.A."/>
            <person name="Poetsch A."/>
            <person name="Seelert H."/>
        </authorList>
    </citation>
    <scope>FUNCTION</scope>
    <scope>MASS SPECTROMETRY</scope>
    <scope>SUBUNIT</scope>
    <scope>SUBCELLULAR LOCATION</scope>
    <source>
        <strain>NIES-2133 / IAM M-273 / BP-1</strain>
    </source>
</reference>
<accession>Q8DLU1</accession>
<protein>
    <recommendedName>
        <fullName evidence="1">ATP synthase gamma chain</fullName>
    </recommendedName>
    <alternativeName>
        <fullName evidence="1">ATP synthase F1 sector gamma subunit</fullName>
    </alternativeName>
    <alternativeName>
        <fullName evidence="1">F-ATPase gamma subunit</fullName>
    </alternativeName>
</protein>
<organism>
    <name type="scientific">Thermosynechococcus vestitus (strain NIES-2133 / IAM M-273 / BP-1)</name>
    <dbReference type="NCBI Taxonomy" id="197221"/>
    <lineage>
        <taxon>Bacteria</taxon>
        <taxon>Bacillati</taxon>
        <taxon>Cyanobacteriota</taxon>
        <taxon>Cyanophyceae</taxon>
        <taxon>Acaryochloridales</taxon>
        <taxon>Thermosynechococcaceae</taxon>
        <taxon>Thermosynechococcus</taxon>
    </lineage>
</organism>
<gene>
    <name evidence="1" type="primary">atpG</name>
    <name evidence="1" type="synonym">atpC</name>
    <name type="ordered locus">tll0385</name>
</gene>
<sequence length="315" mass="34963">MANLKAIRDRIKTIKDTRKITEAMRLVAAAKVRRAQEQVMASRPFADRLAQVLYSLQTRLRFEDVDLPLLAKRPVKTVALLVVTGDRGLCGGYNTNVIRRAKERLQELEAEGLKYTLVIVGRKAAQYFQRRDYPIDAVYSGLEQIPSASEAGQIASELLSLFLSETVDRVELIYTKFVSLISSKPVVQTLLPLDPQGLETADDEIFRLTTRGSHLEVNREKVTSTLPALPSDMIFEQDPLQILDALLPLYLNNQLLRALQEAAASELAARMTAMNNASDNAQALIGTLTLSYNKARQAAITQEILEVVAGAEALR</sequence>
<feature type="chain" id="PRO_0000073402" description="ATP synthase gamma chain">
    <location>
        <begin position="1"/>
        <end position="315"/>
    </location>
</feature>
<feature type="helix" evidence="3">
    <location>
        <begin position="28"/>
        <end position="41"/>
    </location>
</feature>
<feature type="helix" evidence="3">
    <location>
        <begin position="43"/>
        <end position="57"/>
    </location>
</feature>
<feature type="helix" evidence="3">
    <location>
        <begin position="62"/>
        <end position="64"/>
    </location>
</feature>
<feature type="helix" evidence="3">
    <location>
        <begin position="68"/>
        <end position="70"/>
    </location>
</feature>
<feature type="strand" evidence="3">
    <location>
        <begin position="76"/>
        <end position="83"/>
    </location>
</feature>
<feature type="helix" evidence="3">
    <location>
        <begin position="93"/>
        <end position="110"/>
    </location>
</feature>
<feature type="strand" evidence="3">
    <location>
        <begin position="114"/>
        <end position="121"/>
    </location>
</feature>
<feature type="helix" evidence="3">
    <location>
        <begin position="122"/>
        <end position="130"/>
    </location>
</feature>
<feature type="strand" evidence="3">
    <location>
        <begin position="135"/>
        <end position="139"/>
    </location>
</feature>
<feature type="helix" evidence="3">
    <location>
        <begin position="148"/>
        <end position="163"/>
    </location>
</feature>
<feature type="strand" evidence="3">
    <location>
        <begin position="168"/>
        <end position="177"/>
    </location>
</feature>
<feature type="strand" evidence="3">
    <location>
        <begin position="179"/>
        <end position="181"/>
    </location>
</feature>
<feature type="strand" evidence="3">
    <location>
        <begin position="183"/>
        <end position="192"/>
    </location>
</feature>
<feature type="helix" evidence="3">
    <location>
        <begin position="195"/>
        <end position="199"/>
    </location>
</feature>
<feature type="strand" evidence="3">
    <location>
        <begin position="204"/>
        <end position="210"/>
    </location>
</feature>
<feature type="strand" evidence="3">
    <location>
        <begin position="212"/>
        <end position="221"/>
    </location>
</feature>
<feature type="strand" evidence="3">
    <location>
        <begin position="234"/>
        <end position="237"/>
    </location>
</feature>
<feature type="helix" evidence="3">
    <location>
        <begin position="239"/>
        <end position="276"/>
    </location>
</feature>
<evidence type="ECO:0000255" key="1">
    <source>
        <dbReference type="HAMAP-Rule" id="MF_00815"/>
    </source>
</evidence>
<evidence type="ECO:0000269" key="2">
    <source>
    </source>
</evidence>
<evidence type="ECO:0007829" key="3">
    <source>
        <dbReference type="PDB" id="5ZWL"/>
    </source>
</evidence>
<dbReference type="EMBL" id="BA000039">
    <property type="protein sequence ID" value="BAC07937.1"/>
    <property type="molecule type" value="Genomic_DNA"/>
</dbReference>
<dbReference type="RefSeq" id="NP_681175.1">
    <property type="nucleotide sequence ID" value="NC_004113.1"/>
</dbReference>
<dbReference type="RefSeq" id="WP_011056240.1">
    <property type="nucleotide sequence ID" value="NC_004113.1"/>
</dbReference>
<dbReference type="PDB" id="5ZWL">
    <property type="method" value="X-ray"/>
    <property type="resolution" value="1.98 A"/>
    <property type="chains" value="G=12-285"/>
</dbReference>
<dbReference type="PDBsum" id="5ZWL"/>
<dbReference type="SMR" id="Q8DLU1"/>
<dbReference type="STRING" id="197221.gene:10746973"/>
<dbReference type="EnsemblBacteria" id="BAC07937">
    <property type="protein sequence ID" value="BAC07937"/>
    <property type="gene ID" value="BAC07937"/>
</dbReference>
<dbReference type="KEGG" id="tel:tll0385"/>
<dbReference type="PATRIC" id="fig|197221.4.peg.407"/>
<dbReference type="eggNOG" id="COG0224">
    <property type="taxonomic scope" value="Bacteria"/>
</dbReference>
<dbReference type="Proteomes" id="UP000000440">
    <property type="component" value="Chromosome"/>
</dbReference>
<dbReference type="GO" id="GO:0031676">
    <property type="term" value="C:plasma membrane-derived thylakoid membrane"/>
    <property type="evidence" value="ECO:0007669"/>
    <property type="project" value="UniProtKB-SubCell"/>
</dbReference>
<dbReference type="GO" id="GO:0045259">
    <property type="term" value="C:proton-transporting ATP synthase complex"/>
    <property type="evidence" value="ECO:0007669"/>
    <property type="project" value="UniProtKB-KW"/>
</dbReference>
<dbReference type="GO" id="GO:0005524">
    <property type="term" value="F:ATP binding"/>
    <property type="evidence" value="ECO:0007669"/>
    <property type="project" value="UniProtKB-UniRule"/>
</dbReference>
<dbReference type="GO" id="GO:0046933">
    <property type="term" value="F:proton-transporting ATP synthase activity, rotational mechanism"/>
    <property type="evidence" value="ECO:0007669"/>
    <property type="project" value="UniProtKB-UniRule"/>
</dbReference>
<dbReference type="CDD" id="cd12151">
    <property type="entry name" value="F1-ATPase_gamma"/>
    <property type="match status" value="1"/>
</dbReference>
<dbReference type="FunFam" id="3.40.1380.10:FF:000006">
    <property type="entry name" value="ATP synthase gamma chain"/>
    <property type="match status" value="1"/>
</dbReference>
<dbReference type="FunFam" id="1.10.287.80:FF:000003">
    <property type="entry name" value="ATP synthase gamma chain, chloroplastic"/>
    <property type="match status" value="1"/>
</dbReference>
<dbReference type="FunFam" id="1.10.287.80:FF:000004">
    <property type="entry name" value="ATP synthase gamma chain, chloroplastic"/>
    <property type="match status" value="1"/>
</dbReference>
<dbReference type="Gene3D" id="3.40.1380.10">
    <property type="match status" value="1"/>
</dbReference>
<dbReference type="Gene3D" id="1.10.287.80">
    <property type="entry name" value="ATP synthase, gamma subunit, helix hairpin domain"/>
    <property type="match status" value="2"/>
</dbReference>
<dbReference type="HAMAP" id="MF_00815">
    <property type="entry name" value="ATP_synth_gamma_bact"/>
    <property type="match status" value="1"/>
</dbReference>
<dbReference type="InterPro" id="IPR035968">
    <property type="entry name" value="ATP_synth_F1_ATPase_gsu"/>
</dbReference>
<dbReference type="InterPro" id="IPR000131">
    <property type="entry name" value="ATP_synth_F1_gsu"/>
</dbReference>
<dbReference type="InterPro" id="IPR023632">
    <property type="entry name" value="ATP_synth_F1_gsu_CS"/>
</dbReference>
<dbReference type="NCBIfam" id="TIGR01146">
    <property type="entry name" value="ATPsyn_F1gamma"/>
    <property type="match status" value="1"/>
</dbReference>
<dbReference type="NCBIfam" id="NF004145">
    <property type="entry name" value="PRK05621.1-2"/>
    <property type="match status" value="1"/>
</dbReference>
<dbReference type="PANTHER" id="PTHR11693">
    <property type="entry name" value="ATP SYNTHASE GAMMA CHAIN"/>
    <property type="match status" value="1"/>
</dbReference>
<dbReference type="PANTHER" id="PTHR11693:SF41">
    <property type="entry name" value="ATP SYNTHASE GAMMA CHAIN, CHLOROPLASTIC"/>
    <property type="match status" value="1"/>
</dbReference>
<dbReference type="Pfam" id="PF00231">
    <property type="entry name" value="ATP-synt"/>
    <property type="match status" value="1"/>
</dbReference>
<dbReference type="PRINTS" id="PR00126">
    <property type="entry name" value="ATPASEGAMMA"/>
</dbReference>
<dbReference type="SUPFAM" id="SSF52943">
    <property type="entry name" value="ATP synthase (F1-ATPase), gamma subunit"/>
    <property type="match status" value="1"/>
</dbReference>
<dbReference type="PROSITE" id="PS00153">
    <property type="entry name" value="ATPASE_GAMMA"/>
    <property type="match status" value="1"/>
</dbReference>
<name>ATPG_THEVB</name>